<accession>P0CM21</accession>
<accession>Q55U28</accession>
<accession>Q5KIB4</accession>
<proteinExistence type="inferred from homology"/>
<reference key="1">
    <citation type="journal article" date="2005" name="Science">
        <title>The genome of the basidiomycetous yeast and human pathogen Cryptococcus neoformans.</title>
        <authorList>
            <person name="Loftus B.J."/>
            <person name="Fung E."/>
            <person name="Roncaglia P."/>
            <person name="Rowley D."/>
            <person name="Amedeo P."/>
            <person name="Bruno D."/>
            <person name="Vamathevan J."/>
            <person name="Miranda M."/>
            <person name="Anderson I.J."/>
            <person name="Fraser J.A."/>
            <person name="Allen J.E."/>
            <person name="Bosdet I.E."/>
            <person name="Brent M.R."/>
            <person name="Chiu R."/>
            <person name="Doering T.L."/>
            <person name="Donlin M.J."/>
            <person name="D'Souza C.A."/>
            <person name="Fox D.S."/>
            <person name="Grinberg V."/>
            <person name="Fu J."/>
            <person name="Fukushima M."/>
            <person name="Haas B.J."/>
            <person name="Huang J.C."/>
            <person name="Janbon G."/>
            <person name="Jones S.J.M."/>
            <person name="Koo H.L."/>
            <person name="Krzywinski M.I."/>
            <person name="Kwon-Chung K.J."/>
            <person name="Lengeler K.B."/>
            <person name="Maiti R."/>
            <person name="Marra M.A."/>
            <person name="Marra R.E."/>
            <person name="Mathewson C.A."/>
            <person name="Mitchell T.G."/>
            <person name="Pertea M."/>
            <person name="Riggs F.R."/>
            <person name="Salzberg S.L."/>
            <person name="Schein J.E."/>
            <person name="Shvartsbeyn A."/>
            <person name="Shin H."/>
            <person name="Shumway M."/>
            <person name="Specht C.A."/>
            <person name="Suh B.B."/>
            <person name="Tenney A."/>
            <person name="Utterback T.R."/>
            <person name="Wickes B.L."/>
            <person name="Wortman J.R."/>
            <person name="Wye N.H."/>
            <person name="Kronstad J.W."/>
            <person name="Lodge J.K."/>
            <person name="Heitman J."/>
            <person name="Davis R.W."/>
            <person name="Fraser C.M."/>
            <person name="Hyman R.W."/>
        </authorList>
    </citation>
    <scope>NUCLEOTIDE SEQUENCE [LARGE SCALE GENOMIC DNA]</scope>
    <source>
        <strain>B-3501A</strain>
    </source>
</reference>
<keyword id="KW-0012">Acyltransferase</keyword>
<keyword id="KW-0028">Amino-acid biosynthesis</keyword>
<keyword id="KW-0055">Arginine biosynthesis</keyword>
<keyword id="KW-0068">Autocatalytic cleavage</keyword>
<keyword id="KW-0496">Mitochondrion</keyword>
<keyword id="KW-0511">Multifunctional enzyme</keyword>
<keyword id="KW-0808">Transferase</keyword>
<gene>
    <name type="ordered locus">CNBD2760</name>
</gene>
<protein>
    <recommendedName>
        <fullName evidence="1">Arginine biosynthesis bifunctional protein ArgJ, mitochondrial</fullName>
    </recommendedName>
    <domain>
        <recommendedName>
            <fullName evidence="1">Glutamate N-acetyltransferase</fullName>
            <shortName evidence="1">GAT</shortName>
            <ecNumber evidence="1">2.3.1.35</ecNumber>
        </recommendedName>
        <alternativeName>
            <fullName evidence="1">Ornithine acetyltransferase</fullName>
            <shortName evidence="1">OATase</shortName>
        </alternativeName>
        <alternativeName>
            <fullName evidence="1">Ornithine transacetylase</fullName>
        </alternativeName>
    </domain>
    <domain>
        <recommendedName>
            <fullName evidence="1">Amino-acid acetyltransferase</fullName>
            <ecNumber evidence="1">2.3.1.1</ecNumber>
        </recommendedName>
        <alternativeName>
            <fullName evidence="1">N-acetylglutamate synthase</fullName>
            <shortName evidence="1">AGS</shortName>
        </alternativeName>
    </domain>
    <component>
        <recommendedName>
            <fullName evidence="1">Arginine biosynthesis bifunctional protein ArgJ alpha chain</fullName>
        </recommendedName>
    </component>
    <component>
        <recommendedName>
            <fullName evidence="1">Arginine biosynthesis bifunctional protein ArgJ beta chain</fullName>
        </recommendedName>
    </component>
</protein>
<dbReference type="EC" id="2.3.1.35" evidence="1"/>
<dbReference type="EC" id="2.3.1.1" evidence="1"/>
<dbReference type="EMBL" id="AAEY01000020">
    <property type="protein sequence ID" value="EAL21221.1"/>
    <property type="molecule type" value="Genomic_DNA"/>
</dbReference>
<dbReference type="RefSeq" id="XP_775868.1">
    <property type="nucleotide sequence ID" value="XM_770775.1"/>
</dbReference>
<dbReference type="SMR" id="P0CM21"/>
<dbReference type="MEROPS" id="T05.001"/>
<dbReference type="GeneID" id="4935665"/>
<dbReference type="KEGG" id="cnb:CNBD2760"/>
<dbReference type="VEuPathDB" id="FungiDB:CNBD2760"/>
<dbReference type="HOGENOM" id="CLU_027172_1_0_1"/>
<dbReference type="OrthoDB" id="3474at5206"/>
<dbReference type="UniPathway" id="UPA00068">
    <property type="reaction ID" value="UER00106"/>
</dbReference>
<dbReference type="UniPathway" id="UPA00068">
    <property type="reaction ID" value="UER00111"/>
</dbReference>
<dbReference type="GO" id="GO:0005759">
    <property type="term" value="C:mitochondrial matrix"/>
    <property type="evidence" value="ECO:0007669"/>
    <property type="project" value="UniProtKB-SubCell"/>
</dbReference>
<dbReference type="GO" id="GO:0004358">
    <property type="term" value="F:glutamate N-acetyltransferase activity"/>
    <property type="evidence" value="ECO:0007669"/>
    <property type="project" value="UniProtKB-UniRule"/>
</dbReference>
<dbReference type="GO" id="GO:0004042">
    <property type="term" value="F:L-glutamate N-acetyltransferase activity"/>
    <property type="evidence" value="ECO:0007669"/>
    <property type="project" value="UniProtKB-UniRule"/>
</dbReference>
<dbReference type="GO" id="GO:0006526">
    <property type="term" value="P:L-arginine biosynthetic process"/>
    <property type="evidence" value="ECO:0007669"/>
    <property type="project" value="UniProtKB-UniRule"/>
</dbReference>
<dbReference type="GO" id="GO:0006592">
    <property type="term" value="P:ornithine biosynthetic process"/>
    <property type="evidence" value="ECO:0007669"/>
    <property type="project" value="EnsemblFungi"/>
</dbReference>
<dbReference type="CDD" id="cd02152">
    <property type="entry name" value="OAT"/>
    <property type="match status" value="1"/>
</dbReference>
<dbReference type="FunFam" id="3.10.20.340:FF:000002">
    <property type="entry name" value="Arginine biosynthesis bifunctional protein ArgJ, mitochondrial"/>
    <property type="match status" value="1"/>
</dbReference>
<dbReference type="FunFam" id="3.30.2330.10:FF:000001">
    <property type="entry name" value="Arginine biosynthesis bifunctional protein ArgJ, mitochondrial"/>
    <property type="match status" value="1"/>
</dbReference>
<dbReference type="FunFam" id="3.60.70.12:FF:000002">
    <property type="entry name" value="Arginine biosynthesis bifunctional protein ArgJ, mitochondrial"/>
    <property type="match status" value="1"/>
</dbReference>
<dbReference type="Gene3D" id="3.30.2330.10">
    <property type="entry name" value="arginine biosynthesis bifunctional protein suprefamily"/>
    <property type="match status" value="1"/>
</dbReference>
<dbReference type="Gene3D" id="3.10.20.340">
    <property type="entry name" value="ArgJ beta chain, C-terminal domain"/>
    <property type="match status" value="1"/>
</dbReference>
<dbReference type="Gene3D" id="3.60.70.12">
    <property type="entry name" value="L-amino peptidase D-ALA esterase/amidase"/>
    <property type="match status" value="1"/>
</dbReference>
<dbReference type="HAMAP" id="MF_01106">
    <property type="entry name" value="ArgJ"/>
    <property type="match status" value="1"/>
</dbReference>
<dbReference type="InterPro" id="IPR002813">
    <property type="entry name" value="Arg_biosynth_ArgJ"/>
</dbReference>
<dbReference type="InterPro" id="IPR016117">
    <property type="entry name" value="ArgJ-like_dom_sf"/>
</dbReference>
<dbReference type="InterPro" id="IPR042195">
    <property type="entry name" value="ArgJ_beta_C"/>
</dbReference>
<dbReference type="NCBIfam" id="TIGR00120">
    <property type="entry name" value="ArgJ"/>
    <property type="match status" value="1"/>
</dbReference>
<dbReference type="NCBIfam" id="NF003802">
    <property type="entry name" value="PRK05388.1"/>
    <property type="match status" value="1"/>
</dbReference>
<dbReference type="PANTHER" id="PTHR23100">
    <property type="entry name" value="ARGININE BIOSYNTHESIS BIFUNCTIONAL PROTEIN ARGJ"/>
    <property type="match status" value="1"/>
</dbReference>
<dbReference type="PANTHER" id="PTHR23100:SF0">
    <property type="entry name" value="ARGININE BIOSYNTHESIS BIFUNCTIONAL PROTEIN ARGJ, MITOCHONDRIAL"/>
    <property type="match status" value="1"/>
</dbReference>
<dbReference type="Pfam" id="PF01960">
    <property type="entry name" value="ArgJ"/>
    <property type="match status" value="1"/>
</dbReference>
<dbReference type="SUPFAM" id="SSF56266">
    <property type="entry name" value="DmpA/ArgJ-like"/>
    <property type="match status" value="1"/>
</dbReference>
<feature type="chain" id="PRO_0000410011" description="Arginine biosynthesis bifunctional protein ArgJ alpha chain" evidence="1">
    <location>
        <begin position="1"/>
        <end position="236"/>
    </location>
</feature>
<feature type="chain" id="PRO_0000410012" description="Arginine biosynthesis bifunctional protein ArgJ beta chain" evidence="1">
    <location>
        <begin position="237"/>
        <end position="476"/>
    </location>
</feature>
<feature type="active site" description="Nucleophile" evidence="1">
    <location>
        <position position="237"/>
    </location>
</feature>
<feature type="binding site" evidence="1">
    <location>
        <position position="193"/>
    </location>
    <ligand>
        <name>substrate</name>
    </ligand>
</feature>
<feature type="binding site" evidence="1">
    <location>
        <position position="219"/>
    </location>
    <ligand>
        <name>substrate</name>
    </ligand>
</feature>
<feature type="binding site" evidence="1">
    <location>
        <position position="237"/>
    </location>
    <ligand>
        <name>substrate</name>
    </ligand>
</feature>
<feature type="binding site" evidence="1">
    <location>
        <position position="337"/>
    </location>
    <ligand>
        <name>substrate</name>
    </ligand>
</feature>
<feature type="binding site" evidence="1">
    <location>
        <position position="471"/>
    </location>
    <ligand>
        <name>substrate</name>
    </ligand>
</feature>
<feature type="binding site" evidence="1">
    <location>
        <position position="476"/>
    </location>
    <ligand>
        <name>substrate</name>
    </ligand>
</feature>
<feature type="site" description="Involved in the stabilization of negative charge on the oxyanion by the formation of the oxyanion hole" evidence="1">
    <location>
        <position position="154"/>
    </location>
</feature>
<feature type="site" description="Involved in the stabilization of negative charge on the oxyanion by the formation of the oxyanion hole" evidence="1">
    <location>
        <position position="155"/>
    </location>
</feature>
<feature type="site" description="Cleavage; by autolysis" evidence="1">
    <location>
        <begin position="236"/>
        <end position="237"/>
    </location>
</feature>
<organism>
    <name type="scientific">Cryptococcus neoformans var. neoformans serotype D (strain B-3501A)</name>
    <name type="common">Filobasidiella neoformans</name>
    <dbReference type="NCBI Taxonomy" id="283643"/>
    <lineage>
        <taxon>Eukaryota</taxon>
        <taxon>Fungi</taxon>
        <taxon>Dikarya</taxon>
        <taxon>Basidiomycota</taxon>
        <taxon>Agaricomycotina</taxon>
        <taxon>Tremellomycetes</taxon>
        <taxon>Tremellales</taxon>
        <taxon>Cryptococcaceae</taxon>
        <taxon>Cryptococcus</taxon>
        <taxon>Cryptococcus neoformans species complex</taxon>
    </lineage>
</organism>
<evidence type="ECO:0000255" key="1">
    <source>
        <dbReference type="HAMAP-Rule" id="MF_03124"/>
    </source>
</evidence>
<name>ARGJ_CRYNB</name>
<sequence>MPPSIPVPSIVTRAIPSLARAASTTTKSTPSKEHHVHSYSPEVLPLGYAVASTHASIKKKTGALDLGILVSTTDKPASAAACLTRNVFKAAPVTVTTQLLQSGGGRARGFIVNSGCANAVTGKKGLEDAWEMSNTVTSQLPPGQRGIGTLVMSTGVIGQPLPISSIISKIPELVRSLDDSPKSWLDLSKSFMTTDTFPKLRAKSFRLGERLVRIAGIDKGAGMIAPSMGPPQPPHATLLGVIATDAAISPPALQSALNYAVDRSFNNITVDGDMSTNDSIICLANGAAGKLETQGRETAEGMEEITEDGHPEEYKVFREELRSFAEELAQLVVRDGEGATKFVTIRVKNAPSYETAQAVAKSIANSSLFKTAMYGEDANWGRILCAVGYTPTAQAIIPNHVSVSFIPSANVSDPTPLRLLTNGEPEANIDEDRASVILAEEDLEVEVDLGDGHEEAKVWTCDFSHEYVTINGSYRS</sequence>
<comment type="function">
    <text evidence="1">Catalyzes two activities which are involved in the cyclic version of arginine biosynthesis: the synthesis of acetylglutamate from glutamate and acetyl-CoA, and of ornithine by transacetylation between acetylornithine and glutamate.</text>
</comment>
<comment type="catalytic activity">
    <reaction evidence="1">
        <text>N(2)-acetyl-L-ornithine + L-glutamate = N-acetyl-L-glutamate + L-ornithine</text>
        <dbReference type="Rhea" id="RHEA:15349"/>
        <dbReference type="ChEBI" id="CHEBI:29985"/>
        <dbReference type="ChEBI" id="CHEBI:44337"/>
        <dbReference type="ChEBI" id="CHEBI:46911"/>
        <dbReference type="ChEBI" id="CHEBI:57805"/>
        <dbReference type="EC" id="2.3.1.35"/>
    </reaction>
</comment>
<comment type="catalytic activity">
    <reaction evidence="1">
        <text>L-glutamate + acetyl-CoA = N-acetyl-L-glutamate + CoA + H(+)</text>
        <dbReference type="Rhea" id="RHEA:24292"/>
        <dbReference type="ChEBI" id="CHEBI:15378"/>
        <dbReference type="ChEBI" id="CHEBI:29985"/>
        <dbReference type="ChEBI" id="CHEBI:44337"/>
        <dbReference type="ChEBI" id="CHEBI:57287"/>
        <dbReference type="ChEBI" id="CHEBI:57288"/>
        <dbReference type="EC" id="2.3.1.1"/>
    </reaction>
</comment>
<comment type="pathway">
    <text evidence="1">Amino-acid biosynthesis; L-arginine biosynthesis; L-ornithine and N-acetyl-L-glutamate from L-glutamate and N(2)-acetyl-L-ornithine (cyclic): step 1/1.</text>
</comment>
<comment type="pathway">
    <text evidence="1">Amino-acid biosynthesis; L-arginine biosynthesis; N(2)-acetyl-L-ornithine from L-glutamate: step 1/4.</text>
</comment>
<comment type="subunit">
    <text evidence="1">Heterodimer of an alpha and a beta chain.</text>
</comment>
<comment type="subcellular location">
    <subcellularLocation>
        <location evidence="1">Mitochondrion matrix</location>
    </subcellularLocation>
</comment>
<comment type="PTM">
    <text evidence="1">The alpha and beta chains are autoproteolytically processed from a single precursor protein within the mitochondrion.</text>
</comment>
<comment type="miscellaneous">
    <text evidence="1">This protein may be expected to contain an N-terminal transit peptide but none has been predicted.</text>
</comment>
<comment type="similarity">
    <text evidence="1">Belongs to the ArgJ family.</text>
</comment>